<gene>
    <name type="ordered locus">BcerKBAB4_2443</name>
</gene>
<dbReference type="EC" id="3.-.-.-" evidence="1"/>
<dbReference type="EMBL" id="CP000903">
    <property type="protein sequence ID" value="ABY43653.1"/>
    <property type="molecule type" value="Genomic_DNA"/>
</dbReference>
<dbReference type="RefSeq" id="WP_002085329.1">
    <property type="nucleotide sequence ID" value="NC_010184.1"/>
</dbReference>
<dbReference type="SMR" id="A9VGU0"/>
<dbReference type="KEGG" id="bwe:BcerKBAB4_2443"/>
<dbReference type="eggNOG" id="COG2318">
    <property type="taxonomic scope" value="Bacteria"/>
</dbReference>
<dbReference type="HOGENOM" id="CLU_105789_1_0_9"/>
<dbReference type="Proteomes" id="UP000002154">
    <property type="component" value="Chromosome"/>
</dbReference>
<dbReference type="GO" id="GO:0005737">
    <property type="term" value="C:cytoplasm"/>
    <property type="evidence" value="ECO:0007669"/>
    <property type="project" value="UniProtKB-SubCell"/>
</dbReference>
<dbReference type="GO" id="GO:0016787">
    <property type="term" value="F:hydrolase activity"/>
    <property type="evidence" value="ECO:0007669"/>
    <property type="project" value="UniProtKB-UniRule"/>
</dbReference>
<dbReference type="GO" id="GO:0008270">
    <property type="term" value="F:zinc ion binding"/>
    <property type="evidence" value="ECO:0007669"/>
    <property type="project" value="UniProtKB-UniRule"/>
</dbReference>
<dbReference type="Gene3D" id="1.20.120.450">
    <property type="entry name" value="dinb family like domain"/>
    <property type="match status" value="1"/>
</dbReference>
<dbReference type="HAMAP" id="MF_01256">
    <property type="entry name" value="YfiT_hydrol"/>
    <property type="match status" value="1"/>
</dbReference>
<dbReference type="InterPro" id="IPR024775">
    <property type="entry name" value="DinB-like"/>
</dbReference>
<dbReference type="InterPro" id="IPR034660">
    <property type="entry name" value="DinB/YfiT-like"/>
</dbReference>
<dbReference type="InterPro" id="IPR023774">
    <property type="entry name" value="Put_metal_dep_hydrolase_YfiT"/>
</dbReference>
<dbReference type="NCBIfam" id="NF009807">
    <property type="entry name" value="PRK13291.1"/>
    <property type="match status" value="1"/>
</dbReference>
<dbReference type="Pfam" id="PF12867">
    <property type="entry name" value="DinB_2"/>
    <property type="match status" value="1"/>
</dbReference>
<dbReference type="SUPFAM" id="SSF109854">
    <property type="entry name" value="DinB/YfiT-like putative metalloenzymes"/>
    <property type="match status" value="1"/>
</dbReference>
<name>Y2443_BACMK</name>
<reference key="1">
    <citation type="journal article" date="2008" name="Chem. Biol. Interact.">
        <title>Extending the Bacillus cereus group genomics to putative food-borne pathogens of different toxicity.</title>
        <authorList>
            <person name="Lapidus A."/>
            <person name="Goltsman E."/>
            <person name="Auger S."/>
            <person name="Galleron N."/>
            <person name="Segurens B."/>
            <person name="Dossat C."/>
            <person name="Land M.L."/>
            <person name="Broussolle V."/>
            <person name="Brillard J."/>
            <person name="Guinebretiere M.-H."/>
            <person name="Sanchis V."/>
            <person name="Nguen-the C."/>
            <person name="Lereclus D."/>
            <person name="Richardson P."/>
            <person name="Wincker P."/>
            <person name="Weissenbach J."/>
            <person name="Ehrlich S.D."/>
            <person name="Sorokin A."/>
        </authorList>
    </citation>
    <scope>NUCLEOTIDE SEQUENCE [LARGE SCALE GENOMIC DNA]</scope>
    <source>
        <strain>KBAB4</strain>
    </source>
</reference>
<proteinExistence type="inferred from homology"/>
<keyword id="KW-0963">Cytoplasm</keyword>
<keyword id="KW-0378">Hydrolase</keyword>
<keyword id="KW-0479">Metal-binding</keyword>
<keyword id="KW-0862">Zinc</keyword>
<sequence length="173" mass="20227">MKDLRYPIGQFTYVGTITEEIIDKWIQEIEDLPNELARAIKDLDQKQLDTPYRVGGWTVRQVVHHVVDSHMNSYIRFKLAMTEKNPTIKPYKEEKWAELPDSKLPVDVSLVMLDSLHKRWVNLLYSLEPADLEKTFNHPESGETKLAAAIGLYAWHGRHHTAHITSLRERLNW</sequence>
<feature type="chain" id="PRO_1000139978" description="Putative metal-dependent hydrolase BcerKBAB4_2443">
    <location>
        <begin position="1"/>
        <end position="173"/>
    </location>
</feature>
<feature type="binding site" evidence="1">
    <location>
        <position position="65"/>
    </location>
    <ligand>
        <name>Zn(2+)</name>
        <dbReference type="ChEBI" id="CHEBI:29105"/>
    </ligand>
</feature>
<feature type="binding site" evidence="1">
    <location>
        <position position="156"/>
    </location>
    <ligand>
        <name>Zn(2+)</name>
        <dbReference type="ChEBI" id="CHEBI:29105"/>
    </ligand>
</feature>
<feature type="binding site" evidence="1">
    <location>
        <position position="160"/>
    </location>
    <ligand>
        <name>Zn(2+)</name>
        <dbReference type="ChEBI" id="CHEBI:29105"/>
    </ligand>
</feature>
<protein>
    <recommendedName>
        <fullName evidence="1">Putative metal-dependent hydrolase BcerKBAB4_2443</fullName>
        <ecNumber evidence="1">3.-.-.-</ecNumber>
    </recommendedName>
</protein>
<organism>
    <name type="scientific">Bacillus mycoides (strain KBAB4)</name>
    <name type="common">Bacillus weihenstephanensis</name>
    <dbReference type="NCBI Taxonomy" id="315730"/>
    <lineage>
        <taxon>Bacteria</taxon>
        <taxon>Bacillati</taxon>
        <taxon>Bacillota</taxon>
        <taxon>Bacilli</taxon>
        <taxon>Bacillales</taxon>
        <taxon>Bacillaceae</taxon>
        <taxon>Bacillus</taxon>
        <taxon>Bacillus cereus group</taxon>
    </lineage>
</organism>
<evidence type="ECO:0000255" key="1">
    <source>
        <dbReference type="HAMAP-Rule" id="MF_01256"/>
    </source>
</evidence>
<accession>A9VGU0</accession>
<comment type="function">
    <text evidence="1">Possible metal-dependent hydrolase.</text>
</comment>
<comment type="cofactor">
    <cofactor evidence="1">
        <name>Zn(2+)</name>
        <dbReference type="ChEBI" id="CHEBI:29105"/>
    </cofactor>
    <text evidence="1">Binds 1 zinc ion per subunit.</text>
</comment>
<comment type="subunit">
    <text evidence="1">Homodimer.</text>
</comment>
<comment type="subcellular location">
    <subcellularLocation>
        <location evidence="1">Cytoplasm</location>
    </subcellularLocation>
</comment>
<comment type="similarity">
    <text evidence="1">Belongs to the metal hydrolase YfiT family.</text>
</comment>